<proteinExistence type="evidence at protein level"/>
<comment type="alternative products">
    <event type="alternative splicing"/>
    <isoform>
        <id>Q566Q8-1</id>
        <name>1</name>
        <sequence type="displayed"/>
    </isoform>
    <isoform>
        <id>Q566Q8-2</id>
        <name>2</name>
        <sequence type="described" ref="VSP_059975 VSP_059976"/>
    </isoform>
</comment>
<comment type="similarity">
    <text evidence="2">Belongs to the UPF0696 family.</text>
</comment>
<comment type="sequence caution" evidence="2">
    <conflict type="erroneous translation">
        <sequence resource="EMBL-CDS" id="AAH93387"/>
    </conflict>
    <text>Wrong choice of frame.</text>
</comment>
<feature type="chain" id="PRO_0000228119" description="UPF0696 protein C11orf68 homolog">
    <location>
        <begin position="1"/>
        <end position="292"/>
    </location>
</feature>
<feature type="region of interest" description="Disordered" evidence="1">
    <location>
        <begin position="1"/>
        <end position="60"/>
    </location>
</feature>
<feature type="compositionally biased region" description="Low complexity" evidence="1">
    <location>
        <begin position="1"/>
        <end position="10"/>
    </location>
</feature>
<feature type="compositionally biased region" description="Gly residues" evidence="1">
    <location>
        <begin position="11"/>
        <end position="20"/>
    </location>
</feature>
<feature type="compositionally biased region" description="Basic and acidic residues" evidence="1">
    <location>
        <begin position="35"/>
        <end position="44"/>
    </location>
</feature>
<feature type="splice variant" id="VSP_059975" description="In isoform 2.">
    <original>RMEPNEELEEEDSPGGREDGFTAEHLAAEAMAADMDPWLVFDARTTPATELDAWLAKYPPSQVTRYGDPGSPNSEPVGWIAAYGQGYTPNSGDVQGLQAAWEALQTSGRPITPGTLRQLAITHHVLSGKWLIHLA</original>
    <variation>SSLTTGWNQMKSWKRRTLQVVVRMASLLSTWLQRPWQLTWTPGWYLMPVLHLPQSWMPGWPSTHHLKLLAMGTQVHPTLNLWAGLQPMGRVTPPIQGMYKGCRQPGRLCRPVGDPSHQVPCASWPSPTMCSPASG</variation>
    <location>
        <begin position="41"/>
        <end position="175"/>
    </location>
</feature>
<feature type="splice variant" id="VSP_059976" description="In isoform 2.">
    <location>
        <begin position="176"/>
        <end position="292"/>
    </location>
</feature>
<sequence length="292" mass="31443">MAAAAAAVAGAGRGGGGGADPGQERSRARSWVGAERSEGRRMEPNEELEEEDSPGGREDGFTAEHLAAEAMAADMDPWLVFDARTTPATELDAWLAKYPPSQVTRYGDPGSPNSEPVGWIAAYGQGYTPNSGDVQGLQAAWEALQTSGRPITPGTLRQLAITHHVLSGKWLIHLAPGFKLDHAWAGIARAVVEGRLQVAKVSPRAKEGGRQVICVYTDDFTDRLGVLEADSAIRAAGIKCLLTYKPDVYTYLGIYRANRWHLCPTLYESRFQLGGNARGSRVLDRANNVELT</sequence>
<keyword id="KW-0025">Alternative splicing</keyword>
<keyword id="KW-0903">Direct protein sequencing</keyword>
<keyword id="KW-1185">Reference proteome</keyword>
<gene>
    <name type="primary">Bles03</name>
</gene>
<protein>
    <recommendedName>
        <fullName>UPF0696 protein C11orf68 homolog</fullName>
    </recommendedName>
    <alternativeName>
        <fullName>Basophilic leukemia-expressed protein Bles03</fullName>
    </alternativeName>
</protein>
<evidence type="ECO:0000256" key="1">
    <source>
        <dbReference type="SAM" id="MobiDB-lite"/>
    </source>
</evidence>
<evidence type="ECO:0000305" key="2"/>
<reference key="1">
    <citation type="journal article" date="2004" name="Nature">
        <title>Genome sequence of the Brown Norway rat yields insights into mammalian evolution.</title>
        <authorList>
            <person name="Gibbs R.A."/>
            <person name="Weinstock G.M."/>
            <person name="Metzker M.L."/>
            <person name="Muzny D.M."/>
            <person name="Sodergren E.J."/>
            <person name="Scherer S."/>
            <person name="Scott G."/>
            <person name="Steffen D."/>
            <person name="Worley K.C."/>
            <person name="Burch P.E."/>
            <person name="Okwuonu G."/>
            <person name="Hines S."/>
            <person name="Lewis L."/>
            <person name="Deramo C."/>
            <person name="Delgado O."/>
            <person name="Dugan-Rocha S."/>
            <person name="Miner G."/>
            <person name="Morgan M."/>
            <person name="Hawes A."/>
            <person name="Gill R."/>
            <person name="Holt R.A."/>
            <person name="Adams M.D."/>
            <person name="Amanatides P.G."/>
            <person name="Baden-Tillson H."/>
            <person name="Barnstead M."/>
            <person name="Chin S."/>
            <person name="Evans C.A."/>
            <person name="Ferriera S."/>
            <person name="Fosler C."/>
            <person name="Glodek A."/>
            <person name="Gu Z."/>
            <person name="Jennings D."/>
            <person name="Kraft C.L."/>
            <person name="Nguyen T."/>
            <person name="Pfannkoch C.M."/>
            <person name="Sitter C."/>
            <person name="Sutton G.G."/>
            <person name="Venter J.C."/>
            <person name="Woodage T."/>
            <person name="Smith D."/>
            <person name="Lee H.-M."/>
            <person name="Gustafson E."/>
            <person name="Cahill P."/>
            <person name="Kana A."/>
            <person name="Doucette-Stamm L."/>
            <person name="Weinstock K."/>
            <person name="Fechtel K."/>
            <person name="Weiss R.B."/>
            <person name="Dunn D.M."/>
            <person name="Green E.D."/>
            <person name="Blakesley R.W."/>
            <person name="Bouffard G.G."/>
            <person name="De Jong P.J."/>
            <person name="Osoegawa K."/>
            <person name="Zhu B."/>
            <person name="Marra M."/>
            <person name="Schein J."/>
            <person name="Bosdet I."/>
            <person name="Fjell C."/>
            <person name="Jones S."/>
            <person name="Krzywinski M."/>
            <person name="Mathewson C."/>
            <person name="Siddiqui A."/>
            <person name="Wye N."/>
            <person name="McPherson J."/>
            <person name="Zhao S."/>
            <person name="Fraser C.M."/>
            <person name="Shetty J."/>
            <person name="Shatsman S."/>
            <person name="Geer K."/>
            <person name="Chen Y."/>
            <person name="Abramzon S."/>
            <person name="Nierman W.C."/>
            <person name="Havlak P.H."/>
            <person name="Chen R."/>
            <person name="Durbin K.J."/>
            <person name="Egan A."/>
            <person name="Ren Y."/>
            <person name="Song X.-Z."/>
            <person name="Li B."/>
            <person name="Liu Y."/>
            <person name="Qin X."/>
            <person name="Cawley S."/>
            <person name="Cooney A.J."/>
            <person name="D'Souza L.M."/>
            <person name="Martin K."/>
            <person name="Wu J.Q."/>
            <person name="Gonzalez-Garay M.L."/>
            <person name="Jackson A.R."/>
            <person name="Kalafus K.J."/>
            <person name="McLeod M.P."/>
            <person name="Milosavljevic A."/>
            <person name="Virk D."/>
            <person name="Volkov A."/>
            <person name="Wheeler D.A."/>
            <person name="Zhang Z."/>
            <person name="Bailey J.A."/>
            <person name="Eichler E.E."/>
            <person name="Tuzun E."/>
            <person name="Birney E."/>
            <person name="Mongin E."/>
            <person name="Ureta-Vidal A."/>
            <person name="Woodwark C."/>
            <person name="Zdobnov E."/>
            <person name="Bork P."/>
            <person name="Suyama M."/>
            <person name="Torrents D."/>
            <person name="Alexandersson M."/>
            <person name="Trask B.J."/>
            <person name="Young J.M."/>
            <person name="Huang H."/>
            <person name="Wang H."/>
            <person name="Xing H."/>
            <person name="Daniels S."/>
            <person name="Gietzen D."/>
            <person name="Schmidt J."/>
            <person name="Stevens K."/>
            <person name="Vitt U."/>
            <person name="Wingrove J."/>
            <person name="Camara F."/>
            <person name="Mar Alba M."/>
            <person name="Abril J.F."/>
            <person name="Guigo R."/>
            <person name="Smit A."/>
            <person name="Dubchak I."/>
            <person name="Rubin E.M."/>
            <person name="Couronne O."/>
            <person name="Poliakov A."/>
            <person name="Huebner N."/>
            <person name="Ganten D."/>
            <person name="Goesele C."/>
            <person name="Hummel O."/>
            <person name="Kreitler T."/>
            <person name="Lee Y.-A."/>
            <person name="Monti J."/>
            <person name="Schulz H."/>
            <person name="Zimdahl H."/>
            <person name="Himmelbauer H."/>
            <person name="Lehrach H."/>
            <person name="Jacob H.J."/>
            <person name="Bromberg S."/>
            <person name="Gullings-Handley J."/>
            <person name="Jensen-Seaman M.I."/>
            <person name="Kwitek A.E."/>
            <person name="Lazar J."/>
            <person name="Pasko D."/>
            <person name="Tonellato P.J."/>
            <person name="Twigger S."/>
            <person name="Ponting C.P."/>
            <person name="Duarte J.M."/>
            <person name="Rice S."/>
            <person name="Goodstadt L."/>
            <person name="Beatson S.A."/>
            <person name="Emes R.D."/>
            <person name="Winter E.E."/>
            <person name="Webber C."/>
            <person name="Brandt P."/>
            <person name="Nyakatura G."/>
            <person name="Adetobi M."/>
            <person name="Chiaromonte F."/>
            <person name="Elnitski L."/>
            <person name="Eswara P."/>
            <person name="Hardison R.C."/>
            <person name="Hou M."/>
            <person name="Kolbe D."/>
            <person name="Makova K."/>
            <person name="Miller W."/>
            <person name="Nekrutenko A."/>
            <person name="Riemer C."/>
            <person name="Schwartz S."/>
            <person name="Taylor J."/>
            <person name="Yang S."/>
            <person name="Zhang Y."/>
            <person name="Lindpaintner K."/>
            <person name="Andrews T.D."/>
            <person name="Caccamo M."/>
            <person name="Clamp M."/>
            <person name="Clarke L."/>
            <person name="Curwen V."/>
            <person name="Durbin R.M."/>
            <person name="Eyras E."/>
            <person name="Searle S.M."/>
            <person name="Cooper G.M."/>
            <person name="Batzoglou S."/>
            <person name="Brudno M."/>
            <person name="Sidow A."/>
            <person name="Stone E.A."/>
            <person name="Payseur B.A."/>
            <person name="Bourque G."/>
            <person name="Lopez-Otin C."/>
            <person name="Puente X.S."/>
            <person name="Chakrabarti K."/>
            <person name="Chatterji S."/>
            <person name="Dewey C."/>
            <person name="Pachter L."/>
            <person name="Bray N."/>
            <person name="Yap V.B."/>
            <person name="Caspi A."/>
            <person name="Tesler G."/>
            <person name="Pevzner P.A."/>
            <person name="Haussler D."/>
            <person name="Roskin K.M."/>
            <person name="Baertsch R."/>
            <person name="Clawson H."/>
            <person name="Furey T.S."/>
            <person name="Hinrichs A.S."/>
            <person name="Karolchik D."/>
            <person name="Kent W.J."/>
            <person name="Rosenbloom K.R."/>
            <person name="Trumbower H."/>
            <person name="Weirauch M."/>
            <person name="Cooper D.N."/>
            <person name="Stenson P.D."/>
            <person name="Ma B."/>
            <person name="Brent M."/>
            <person name="Arumugam M."/>
            <person name="Shteynberg D."/>
            <person name="Copley R.R."/>
            <person name="Taylor M.S."/>
            <person name="Riethman H."/>
            <person name="Mudunuri U."/>
            <person name="Peterson J."/>
            <person name="Guyer M."/>
            <person name="Felsenfeld A."/>
            <person name="Old S."/>
            <person name="Mockrin S."/>
            <person name="Collins F.S."/>
        </authorList>
    </citation>
    <scope>NUCLEOTIDE SEQUENCE [LARGE SCALE GENOMIC DNA]</scope>
    <source>
        <strain>Brown Norway</strain>
    </source>
</reference>
<reference key="2">
    <citation type="submission" date="2005-07" db="EMBL/GenBank/DDBJ databases">
        <authorList>
            <person name="Mural R.J."/>
            <person name="Adams M.D."/>
            <person name="Myers E.W."/>
            <person name="Smith H.O."/>
            <person name="Venter J.C."/>
        </authorList>
    </citation>
    <scope>NUCLEOTIDE SEQUENCE [LARGE SCALE GENOMIC DNA]</scope>
</reference>
<reference key="3">
    <citation type="journal article" date="2004" name="Genome Res.">
        <title>The status, quality, and expansion of the NIH full-length cDNA project: the Mammalian Gene Collection (MGC).</title>
        <authorList>
            <consortium name="The MGC Project Team"/>
        </authorList>
    </citation>
    <scope>NUCLEOTIDE SEQUENCE [LARGE SCALE MRNA] OF 1-16 (ISOFORM 2)</scope>
    <source>
        <tissue>Thymus</tissue>
    </source>
</reference>
<reference key="4">
    <citation type="submission" date="2007-04" db="UniProtKB">
        <authorList>
            <person name="Lubec G."/>
            <person name="Chen W.-Q."/>
        </authorList>
    </citation>
    <scope>PROTEIN SEQUENCE OF 224-234</scope>
    <scope>IDENTIFICATION BY MASS SPECTROMETRY</scope>
    <source>
        <strain>Sprague-Dawley</strain>
        <tissue>Hippocampus</tissue>
    </source>
</reference>
<reference key="5">
    <citation type="submission" date="2002-08" db="EMBL/GenBank/DDBJ databases">
        <authorList>
            <person name="Heneberg P."/>
            <person name="Draber P."/>
        </authorList>
    </citation>
    <scope>NUCLEOTIDE SEQUENCE [MRNA] OF 229-292 (ISOFORM 1)</scope>
    <source>
        <strain>Wistar</strain>
        <tissue>Leukemia</tissue>
    </source>
</reference>
<name>CK068_RAT</name>
<dbReference type="EMBL" id="AC109096">
    <property type="status" value="NOT_ANNOTATED_CDS"/>
    <property type="molecule type" value="Genomic_DNA"/>
</dbReference>
<dbReference type="EMBL" id="CH473953">
    <property type="protein sequence ID" value="EDM12488.1"/>
    <property type="molecule type" value="Genomic_DNA"/>
</dbReference>
<dbReference type="EMBL" id="BC093387">
    <property type="protein sequence ID" value="AAH93387.1"/>
    <property type="status" value="ALT_SEQ"/>
    <property type="molecule type" value="mRNA"/>
</dbReference>
<dbReference type="EMBL" id="AF502571">
    <property type="protein sequence ID" value="AAN02287.1"/>
    <property type="molecule type" value="mRNA"/>
</dbReference>
<dbReference type="RefSeq" id="NP_001019404.2">
    <molecule id="Q566Q8-1"/>
    <property type="nucleotide sequence ID" value="NM_001024233.2"/>
</dbReference>
<dbReference type="RefSeq" id="NP_001230463.1">
    <molecule id="Q566Q8-2"/>
    <property type="nucleotide sequence ID" value="NM_001243534.1"/>
</dbReference>
<dbReference type="SMR" id="Q566Q8"/>
<dbReference type="BioGRID" id="251761">
    <property type="interactions" value="1"/>
</dbReference>
<dbReference type="FunCoup" id="Q566Q8">
    <property type="interactions" value="1320"/>
</dbReference>
<dbReference type="STRING" id="10116.ENSRNOP00000027869"/>
<dbReference type="GlyGen" id="Q566Q8">
    <property type="glycosylation" value="1 site"/>
</dbReference>
<dbReference type="PhosphoSitePlus" id="Q566Q8"/>
<dbReference type="jPOST" id="Q566Q8"/>
<dbReference type="PaxDb" id="10116-ENSRNOP00000027869"/>
<dbReference type="PeptideAtlas" id="Q566Q8"/>
<dbReference type="Ensembl" id="ENSRNOT00000027869.8">
    <molecule id="Q566Q8-1"/>
    <property type="protein sequence ID" value="ENSRNOP00000027869.6"/>
    <property type="gene ID" value="ENSRNOG00000020551.8"/>
</dbReference>
<dbReference type="GeneID" id="266609"/>
<dbReference type="KEGG" id="rno:266609"/>
<dbReference type="AGR" id="RGD:628612"/>
<dbReference type="CTD" id="266609"/>
<dbReference type="RGD" id="628612">
    <property type="gene designation" value="Bles03"/>
</dbReference>
<dbReference type="eggNOG" id="ENOG502QRQJ">
    <property type="taxonomic scope" value="Eukaryota"/>
</dbReference>
<dbReference type="GeneTree" id="ENSGT00390000011640"/>
<dbReference type="HOGENOM" id="CLU_051869_1_0_1"/>
<dbReference type="InParanoid" id="Q566Q8"/>
<dbReference type="OMA" id="WIAIYGP"/>
<dbReference type="OrthoDB" id="10067381at2759"/>
<dbReference type="PhylomeDB" id="Q566Q8"/>
<dbReference type="PRO" id="PR:Q566Q8"/>
<dbReference type="Proteomes" id="UP000002494">
    <property type="component" value="Chromosome 1"/>
</dbReference>
<dbReference type="Proteomes" id="UP000234681">
    <property type="component" value="Chromosome 1"/>
</dbReference>
<dbReference type="Bgee" id="ENSRNOG00000020551">
    <property type="expression patterns" value="Expressed in cerebellum and 19 other cell types or tissues"/>
</dbReference>
<dbReference type="FunFam" id="3.30.760.10:FF:000005">
    <property type="entry name" value="UPF0696 protein C11orf68 homolog"/>
    <property type="match status" value="1"/>
</dbReference>
<dbReference type="Gene3D" id="3.30.760.10">
    <property type="entry name" value="RNA Cap, Translation Initiation Factor Eif4e"/>
    <property type="match status" value="1"/>
</dbReference>
<dbReference type="InterPro" id="IPR015034">
    <property type="entry name" value="Bles03"/>
</dbReference>
<dbReference type="InterPro" id="IPR023398">
    <property type="entry name" value="TIF_eIF4e-like"/>
</dbReference>
<dbReference type="PANTHER" id="PTHR31977">
    <property type="entry name" value="UPF0696 PROTEIN C11ORF68"/>
    <property type="match status" value="1"/>
</dbReference>
<dbReference type="PANTHER" id="PTHR31977:SF1">
    <property type="entry name" value="UPF0696 PROTEIN C11ORF68"/>
    <property type="match status" value="1"/>
</dbReference>
<dbReference type="Pfam" id="PF08939">
    <property type="entry name" value="Bles03"/>
    <property type="match status" value="1"/>
</dbReference>
<dbReference type="SUPFAM" id="SSF55418">
    <property type="entry name" value="eIF4e-like"/>
    <property type="match status" value="1"/>
</dbReference>
<organism>
    <name type="scientific">Rattus norvegicus</name>
    <name type="common">Rat</name>
    <dbReference type="NCBI Taxonomy" id="10116"/>
    <lineage>
        <taxon>Eukaryota</taxon>
        <taxon>Metazoa</taxon>
        <taxon>Chordata</taxon>
        <taxon>Craniata</taxon>
        <taxon>Vertebrata</taxon>
        <taxon>Euteleostomi</taxon>
        <taxon>Mammalia</taxon>
        <taxon>Eutheria</taxon>
        <taxon>Euarchontoglires</taxon>
        <taxon>Glires</taxon>
        <taxon>Rodentia</taxon>
        <taxon>Myomorpha</taxon>
        <taxon>Muroidea</taxon>
        <taxon>Muridae</taxon>
        <taxon>Murinae</taxon>
        <taxon>Rattus</taxon>
    </lineage>
</organism>
<accession>Q566Q8</accession>
<accession>A0A0H2UHS1</accession>
<accession>Q8K436</accession>